<comment type="function">
    <text evidence="1">Plays a role in virus cell tropism, and may be required for efficient virus replication in macrophages.</text>
</comment>
<comment type="similarity">
    <text evidence="2">Belongs to the asfivirus MGF 360 family.</text>
</comment>
<accession>P26711</accession>
<gene>
    <name type="ORF">LIS375</name>
</gene>
<proteinExistence type="inferred from homology"/>
<sequence length="375" mass="43896">MNSLQVLTKKVLIENKAFSEYHEDDIFILQQLGLWWHNGPIGFCKQCKMVTSGSMSCSDVDSYELDRALVRAVKKNQTDLIKLFVLWGANINYGIICAKTERTKVLCIQLGADPKFLDVGLYNMFIDLIKQQKVLLAIDIYYDNISILDSFDSHDFYVLIDFIYNCFILNLDEKEKMIKNTYVLKFWFKIAIEFNLIKPIRFLSKKFPHLDYWRLKTAVYLGNVDEIHHAYFQENIRLDPNDMMSLACMYPQNKLGIYYCFVLGANINTALETLIGFINHEVNREITFFSNYGIWSNVHFCISLGANPYTKKIQETLLRQEKNVIMKLLFKKGLLSPHSILHKKILEPSEVRKIISTYEYTETFHSFSLLRDNLQ</sequence>
<name>3605L_ASFL5</name>
<evidence type="ECO:0000250" key="1"/>
<evidence type="ECO:0000305" key="2"/>
<organism>
    <name type="scientific">African swine fever virus (isolate Portugal/Lis 57/1957)</name>
    <name type="common">ASFV</name>
    <dbReference type="NCBI Taxonomy" id="10499"/>
    <lineage>
        <taxon>Viruses</taxon>
        <taxon>Varidnaviria</taxon>
        <taxon>Bamfordvirae</taxon>
        <taxon>Nucleocytoviricota</taxon>
        <taxon>Pokkesviricetes</taxon>
        <taxon>Asfuvirales</taxon>
        <taxon>Asfarviridae</taxon>
        <taxon>Asfivirus</taxon>
        <taxon>African swine fever virus</taxon>
    </lineage>
</organism>
<reference key="1">
    <citation type="journal article" date="1990" name="Virology">
        <title>Genetic variation and multigene families in African swine fever virus.</title>
        <authorList>
            <person name="de la Vega I."/>
            <person name="Vinuela E."/>
            <person name="Blasco R."/>
        </authorList>
    </citation>
    <scope>NUCLEOTIDE SEQUENCE [GENOMIC DNA]</scope>
</reference>
<feature type="chain" id="PRO_0000221944" description="Protein MGF 360-5L">
    <location>
        <begin position="1"/>
        <end position="375"/>
    </location>
</feature>
<dbReference type="EMBL" id="M58155">
    <property type="protein sequence ID" value="AAA42707.1"/>
    <property type="molecule type" value="Genomic_DNA"/>
</dbReference>
<dbReference type="PIR" id="A45348">
    <property type="entry name" value="A45348"/>
</dbReference>
<dbReference type="SMR" id="P26711"/>
<dbReference type="GO" id="GO:0042330">
    <property type="term" value="P:taxis"/>
    <property type="evidence" value="ECO:0007669"/>
    <property type="project" value="InterPro"/>
</dbReference>
<dbReference type="InterPro" id="IPR002595">
    <property type="entry name" value="ASFV_MGF360"/>
</dbReference>
<dbReference type="Pfam" id="PF01671">
    <property type="entry name" value="ASFV_360"/>
    <property type="match status" value="1"/>
</dbReference>
<organismHost>
    <name type="scientific">Ornithodoros</name>
    <name type="common">relapsing fever ticks</name>
    <dbReference type="NCBI Taxonomy" id="6937"/>
</organismHost>
<organismHost>
    <name type="scientific">Sus scrofa</name>
    <name type="common">Pig</name>
    <dbReference type="NCBI Taxonomy" id="9823"/>
</organismHost>
<protein>
    <recommendedName>
        <fullName>Protein MGF 360-5L</fullName>
    </recommendedName>
</protein>